<evidence type="ECO:0000250" key="1"/>
<evidence type="ECO:0000250" key="2">
    <source>
        <dbReference type="UniProtKB" id="P35609"/>
    </source>
</evidence>
<evidence type="ECO:0000255" key="3">
    <source>
        <dbReference type="PROSITE-ProRule" id="PRU00044"/>
    </source>
</evidence>
<evidence type="ECO:0000255" key="4">
    <source>
        <dbReference type="PROSITE-ProRule" id="PRU00448"/>
    </source>
</evidence>
<evidence type="ECO:0000269" key="5">
    <source>
    </source>
</evidence>
<evidence type="ECO:0000305" key="6"/>
<evidence type="ECO:0007744" key="7">
    <source>
    </source>
</evidence>
<keyword id="KW-0009">Actin-binding</keyword>
<keyword id="KW-0106">Calcium</keyword>
<keyword id="KW-0963">Cytoplasm</keyword>
<keyword id="KW-0479">Metal-binding</keyword>
<keyword id="KW-0597">Phosphoprotein</keyword>
<keyword id="KW-1185">Reference proteome</keyword>
<keyword id="KW-0677">Repeat</keyword>
<keyword id="KW-0832">Ubl conjugation</keyword>
<proteinExistence type="evidence at protein level"/>
<accession>Q9JI91</accession>
<accession>G3UW84</accession>
<feature type="chain" id="PRO_0000073436" description="Alpha-actinin-2">
    <location>
        <begin position="1"/>
        <end position="894"/>
    </location>
</feature>
<feature type="domain" description="Calponin-homology (CH) 1" evidence="3">
    <location>
        <begin position="38"/>
        <end position="142"/>
    </location>
</feature>
<feature type="domain" description="Calponin-homology (CH) 2" evidence="3">
    <location>
        <begin position="151"/>
        <end position="257"/>
    </location>
</feature>
<feature type="repeat" description="Spectrin 1">
    <location>
        <begin position="281"/>
        <end position="391"/>
    </location>
</feature>
<feature type="repeat" description="Spectrin 2">
    <location>
        <begin position="401"/>
        <end position="506"/>
    </location>
</feature>
<feature type="repeat" description="Spectrin 3">
    <location>
        <begin position="516"/>
        <end position="627"/>
    </location>
</feature>
<feature type="repeat" description="Spectrin 4">
    <location>
        <begin position="637"/>
        <end position="740"/>
    </location>
</feature>
<feature type="domain" description="EF-hand 1" evidence="4">
    <location>
        <begin position="753"/>
        <end position="788"/>
    </location>
</feature>
<feature type="domain" description="EF-hand 2" evidence="4">
    <location>
        <begin position="789"/>
        <end position="824"/>
    </location>
</feature>
<feature type="region of interest" description="Actin-binding">
    <location>
        <begin position="1"/>
        <end position="254"/>
    </location>
</feature>
<feature type="binding site" evidence="6">
    <location>
        <position position="766"/>
    </location>
    <ligand>
        <name>Ca(2+)</name>
        <dbReference type="ChEBI" id="CHEBI:29108"/>
        <label>1</label>
    </ligand>
</feature>
<feature type="binding site" evidence="6">
    <location>
        <position position="770"/>
    </location>
    <ligand>
        <name>Ca(2+)</name>
        <dbReference type="ChEBI" id="CHEBI:29108"/>
        <label>1</label>
    </ligand>
</feature>
<feature type="binding site" evidence="6">
    <location>
        <position position="777"/>
    </location>
    <ligand>
        <name>Ca(2+)</name>
        <dbReference type="ChEBI" id="CHEBI:29108"/>
        <label>1</label>
    </ligand>
</feature>
<feature type="binding site" evidence="6">
    <location>
        <position position="802"/>
    </location>
    <ligand>
        <name>Ca(2+)</name>
        <dbReference type="ChEBI" id="CHEBI:29108"/>
        <label>2</label>
    </ligand>
</feature>
<feature type="binding site" evidence="6">
    <location>
        <position position="804"/>
    </location>
    <ligand>
        <name>Ca(2+)</name>
        <dbReference type="ChEBI" id="CHEBI:29108"/>
        <label>2</label>
    </ligand>
</feature>
<feature type="binding site" evidence="6">
    <location>
        <position position="808"/>
    </location>
    <ligand>
        <name>Ca(2+)</name>
        <dbReference type="ChEBI" id="CHEBI:29108"/>
        <label>2</label>
    </ligand>
</feature>
<feature type="modified residue" description="Phosphothreonine" evidence="7">
    <location>
        <position position="237"/>
    </location>
</feature>
<feature type="sequence conflict" description="In Ref. 1; AAF76325." evidence="6" ref="1">
    <original>V</original>
    <variation>G</variation>
    <location>
        <position position="272"/>
    </location>
</feature>
<feature type="sequence conflict" description="In Ref. 1; AAF76325." evidence="6" ref="1">
    <original>P</original>
    <variation>A</variation>
    <location>
        <position position="358"/>
    </location>
</feature>
<feature type="sequence conflict" description="In Ref. 1; AAF76325." evidence="6" ref="1">
    <original>W</original>
    <variation>C</variation>
    <location>
        <position position="375"/>
    </location>
</feature>
<feature type="sequence conflict" description="In Ref. 1; AAF76325." evidence="6" ref="1">
    <original>A</original>
    <variation>G</variation>
    <location>
        <position position="705"/>
    </location>
</feature>
<feature type="sequence conflict" description="In Ref. 1; AAF76325." evidence="6" ref="1">
    <original>A</original>
    <variation>G</variation>
    <location>
        <position position="732"/>
    </location>
</feature>
<feature type="sequence conflict" description="In Ref. 1; AAF76325." evidence="6" ref="1">
    <original>E</original>
    <variation>K</variation>
    <location>
        <position position="753"/>
    </location>
</feature>
<organism>
    <name type="scientific">Mus musculus</name>
    <name type="common">Mouse</name>
    <dbReference type="NCBI Taxonomy" id="10090"/>
    <lineage>
        <taxon>Eukaryota</taxon>
        <taxon>Metazoa</taxon>
        <taxon>Chordata</taxon>
        <taxon>Craniata</taxon>
        <taxon>Vertebrata</taxon>
        <taxon>Euteleostomi</taxon>
        <taxon>Mammalia</taxon>
        <taxon>Eutheria</taxon>
        <taxon>Euarchontoglires</taxon>
        <taxon>Glires</taxon>
        <taxon>Rodentia</taxon>
        <taxon>Myomorpha</taxon>
        <taxon>Muroidea</taxon>
        <taxon>Muridae</taxon>
        <taxon>Murinae</taxon>
        <taxon>Mus</taxon>
        <taxon>Mus</taxon>
    </lineage>
</organism>
<name>ACTN2_MOUSE</name>
<dbReference type="EMBL" id="AF248643">
    <property type="protein sequence ID" value="AAF76325.1"/>
    <property type="molecule type" value="mRNA"/>
</dbReference>
<dbReference type="EMBL" id="AC154523">
    <property type="status" value="NOT_ANNOTATED_CDS"/>
    <property type="molecule type" value="Genomic_DNA"/>
</dbReference>
<dbReference type="EMBL" id="CH466588">
    <property type="protein sequence ID" value="EDL32304.1"/>
    <property type="molecule type" value="Genomic_DNA"/>
</dbReference>
<dbReference type="CCDS" id="CCDS26239.1"/>
<dbReference type="RefSeq" id="NP_150371.4">
    <property type="nucleotide sequence ID" value="NM_033268.4"/>
</dbReference>
<dbReference type="BMRB" id="Q9JI91"/>
<dbReference type="SMR" id="Q9JI91"/>
<dbReference type="BioGRID" id="197950">
    <property type="interactions" value="29"/>
</dbReference>
<dbReference type="CORUM" id="Q9JI91"/>
<dbReference type="FunCoup" id="Q9JI91">
    <property type="interactions" value="333"/>
</dbReference>
<dbReference type="IntAct" id="Q9JI91">
    <property type="interactions" value="12"/>
</dbReference>
<dbReference type="MINT" id="Q9JI91"/>
<dbReference type="STRING" id="10090.ENSMUSP00000067708"/>
<dbReference type="GlyGen" id="Q9JI91">
    <property type="glycosylation" value="2 sites, 1 N-linked glycan (1 site), 1 O-linked glycan (1 site)"/>
</dbReference>
<dbReference type="iPTMnet" id="Q9JI91"/>
<dbReference type="PhosphoSitePlus" id="Q9JI91"/>
<dbReference type="jPOST" id="Q9JI91"/>
<dbReference type="PaxDb" id="10090-ENSMUSP00000067708"/>
<dbReference type="PeptideAtlas" id="Q9JI91"/>
<dbReference type="ProteomicsDB" id="285719"/>
<dbReference type="Pumba" id="Q9JI91"/>
<dbReference type="Antibodypedia" id="1323">
    <property type="antibodies" value="447 antibodies from 39 providers"/>
</dbReference>
<dbReference type="DNASU" id="11472"/>
<dbReference type="Ensembl" id="ENSMUST00000064204.14">
    <property type="protein sequence ID" value="ENSMUSP00000067708.8"/>
    <property type="gene ID" value="ENSMUSG00000052374.17"/>
</dbReference>
<dbReference type="Ensembl" id="ENSMUST00000168193.8">
    <property type="protein sequence ID" value="ENSMUSP00000129609.2"/>
    <property type="gene ID" value="ENSMUSG00000052374.17"/>
</dbReference>
<dbReference type="GeneID" id="11472"/>
<dbReference type="KEGG" id="mmu:11472"/>
<dbReference type="UCSC" id="uc007pli.1">
    <property type="organism name" value="mouse"/>
</dbReference>
<dbReference type="AGR" id="MGI:109192"/>
<dbReference type="CTD" id="88"/>
<dbReference type="MGI" id="MGI:109192">
    <property type="gene designation" value="Actn2"/>
</dbReference>
<dbReference type="VEuPathDB" id="HostDB:ENSMUSG00000052374"/>
<dbReference type="eggNOG" id="KOG0035">
    <property type="taxonomic scope" value="Eukaryota"/>
</dbReference>
<dbReference type="GeneTree" id="ENSGT00940000153968"/>
<dbReference type="HOGENOM" id="CLU_005217_1_0_1"/>
<dbReference type="InParanoid" id="Q9JI91"/>
<dbReference type="OMA" id="IMILVDP"/>
<dbReference type="OrthoDB" id="10017054at2759"/>
<dbReference type="PhylomeDB" id="Q9JI91"/>
<dbReference type="TreeFam" id="TF352676"/>
<dbReference type="Reactome" id="R-MMU-114608">
    <property type="pathway name" value="Platelet degranulation"/>
</dbReference>
<dbReference type="Reactome" id="R-MMU-390522">
    <property type="pathway name" value="Striated Muscle Contraction"/>
</dbReference>
<dbReference type="Reactome" id="R-MMU-438066">
    <property type="pathway name" value="Unblocking of NMDA receptors, glutamate binding and activation"/>
</dbReference>
<dbReference type="Reactome" id="R-MMU-5673001">
    <property type="pathway name" value="RAF/MAP kinase cascade"/>
</dbReference>
<dbReference type="BioGRID-ORCS" id="11472">
    <property type="hits" value="3 hits in 78 CRISPR screens"/>
</dbReference>
<dbReference type="CD-CODE" id="CE726F99">
    <property type="entry name" value="Postsynaptic density"/>
</dbReference>
<dbReference type="ChiTaRS" id="Actn2">
    <property type="organism name" value="mouse"/>
</dbReference>
<dbReference type="PRO" id="PR:Q9JI91"/>
<dbReference type="Proteomes" id="UP000000589">
    <property type="component" value="Chromosome 13"/>
</dbReference>
<dbReference type="RNAct" id="Q9JI91">
    <property type="molecule type" value="protein"/>
</dbReference>
<dbReference type="Bgee" id="ENSMUSG00000052374">
    <property type="expression patterns" value="Expressed in soleus muscle and 129 other cell types or tissues"/>
</dbReference>
<dbReference type="ExpressionAtlas" id="Q9JI91">
    <property type="expression patterns" value="baseline and differential"/>
</dbReference>
<dbReference type="GO" id="GO:0030864">
    <property type="term" value="C:cortical actin cytoskeleton"/>
    <property type="evidence" value="ECO:0007669"/>
    <property type="project" value="Ensembl"/>
</dbReference>
<dbReference type="GO" id="GO:0030175">
    <property type="term" value="C:filopodium"/>
    <property type="evidence" value="ECO:0007669"/>
    <property type="project" value="Ensembl"/>
</dbReference>
<dbReference type="GO" id="GO:0005925">
    <property type="term" value="C:focal adhesion"/>
    <property type="evidence" value="ECO:0007669"/>
    <property type="project" value="Ensembl"/>
</dbReference>
<dbReference type="GO" id="GO:0098978">
    <property type="term" value="C:glutamatergic synapse"/>
    <property type="evidence" value="ECO:0007669"/>
    <property type="project" value="Ensembl"/>
</dbReference>
<dbReference type="GO" id="GO:0098871">
    <property type="term" value="C:postsynaptic actin cytoskeleton"/>
    <property type="evidence" value="ECO:0007669"/>
    <property type="project" value="Ensembl"/>
</dbReference>
<dbReference type="GO" id="GO:0098839">
    <property type="term" value="C:postsynaptic density membrane"/>
    <property type="evidence" value="ECO:0007669"/>
    <property type="project" value="Ensembl"/>
</dbReference>
<dbReference type="GO" id="GO:0099092">
    <property type="term" value="C:postsynaptic density, intracellular component"/>
    <property type="evidence" value="ECO:0007669"/>
    <property type="project" value="Ensembl"/>
</dbReference>
<dbReference type="GO" id="GO:0030017">
    <property type="term" value="C:sarcomere"/>
    <property type="evidence" value="ECO:0000314"/>
    <property type="project" value="MGI"/>
</dbReference>
<dbReference type="GO" id="GO:0005865">
    <property type="term" value="C:striated muscle thin filament"/>
    <property type="evidence" value="ECO:0000304"/>
    <property type="project" value="MGI"/>
</dbReference>
<dbReference type="GO" id="GO:0030018">
    <property type="term" value="C:Z disc"/>
    <property type="evidence" value="ECO:0000314"/>
    <property type="project" value="UniProtKB"/>
</dbReference>
<dbReference type="GO" id="GO:0051015">
    <property type="term" value="F:actin filament binding"/>
    <property type="evidence" value="ECO:0000314"/>
    <property type="project" value="MGI"/>
</dbReference>
<dbReference type="GO" id="GO:0005509">
    <property type="term" value="F:calcium ion binding"/>
    <property type="evidence" value="ECO:0007669"/>
    <property type="project" value="InterPro"/>
</dbReference>
<dbReference type="GO" id="GO:0099103">
    <property type="term" value="F:channel activator activity"/>
    <property type="evidence" value="ECO:0007669"/>
    <property type="project" value="Ensembl"/>
</dbReference>
<dbReference type="GO" id="GO:0008092">
    <property type="term" value="F:cytoskeletal protein binding"/>
    <property type="evidence" value="ECO:0000314"/>
    <property type="project" value="UniProtKB"/>
</dbReference>
<dbReference type="GO" id="GO:0051373">
    <property type="term" value="F:FATZ binding"/>
    <property type="evidence" value="ECO:0007669"/>
    <property type="project" value="Ensembl"/>
</dbReference>
<dbReference type="GO" id="GO:0042802">
    <property type="term" value="F:identical protein binding"/>
    <property type="evidence" value="ECO:0007669"/>
    <property type="project" value="Ensembl"/>
</dbReference>
<dbReference type="GO" id="GO:0030274">
    <property type="term" value="F:LIM domain binding"/>
    <property type="evidence" value="ECO:0000353"/>
    <property type="project" value="MGI"/>
</dbReference>
<dbReference type="GO" id="GO:0005546">
    <property type="term" value="F:phosphatidylinositol-4,5-bisphosphate binding"/>
    <property type="evidence" value="ECO:0007669"/>
    <property type="project" value="Ensembl"/>
</dbReference>
<dbReference type="GO" id="GO:0030674">
    <property type="term" value="F:protein-macromolecule adaptor activity"/>
    <property type="evidence" value="ECO:0000304"/>
    <property type="project" value="MGI"/>
</dbReference>
<dbReference type="GO" id="GO:0098973">
    <property type="term" value="F:structural constituent of postsynaptic actin cytoskeleton"/>
    <property type="evidence" value="ECO:0007669"/>
    <property type="project" value="Ensembl"/>
</dbReference>
<dbReference type="GO" id="GO:0031432">
    <property type="term" value="F:titin binding"/>
    <property type="evidence" value="ECO:0007669"/>
    <property type="project" value="Ensembl"/>
</dbReference>
<dbReference type="GO" id="GO:0070080">
    <property type="term" value="F:titin Z domain binding"/>
    <property type="evidence" value="ECO:0007669"/>
    <property type="project" value="Ensembl"/>
</dbReference>
<dbReference type="GO" id="GO:0003713">
    <property type="term" value="F:transcription coactivator activity"/>
    <property type="evidence" value="ECO:0000314"/>
    <property type="project" value="MGI"/>
</dbReference>
<dbReference type="GO" id="GO:0044325">
    <property type="term" value="F:transmembrane transporter binding"/>
    <property type="evidence" value="ECO:0000353"/>
    <property type="project" value="UniProtKB"/>
</dbReference>
<dbReference type="GO" id="GO:0051695">
    <property type="term" value="P:actin filament uncapping"/>
    <property type="evidence" value="ECO:0007669"/>
    <property type="project" value="Ensembl"/>
</dbReference>
<dbReference type="GO" id="GO:0055013">
    <property type="term" value="P:cardiac muscle cell development"/>
    <property type="evidence" value="ECO:0000315"/>
    <property type="project" value="UniProtKB"/>
</dbReference>
<dbReference type="GO" id="GO:0048041">
    <property type="term" value="P:focal adhesion assembly"/>
    <property type="evidence" value="ECO:0007669"/>
    <property type="project" value="Ensembl"/>
</dbReference>
<dbReference type="GO" id="GO:0030035">
    <property type="term" value="P:microspike assembly"/>
    <property type="evidence" value="ECO:0007669"/>
    <property type="project" value="Ensembl"/>
</dbReference>
<dbReference type="GO" id="GO:0006936">
    <property type="term" value="P:muscle contraction"/>
    <property type="evidence" value="ECO:0000304"/>
    <property type="project" value="MGI"/>
</dbReference>
<dbReference type="GO" id="GO:0043267">
    <property type="term" value="P:negative regulation of potassium ion transport"/>
    <property type="evidence" value="ECO:0007669"/>
    <property type="project" value="Ensembl"/>
</dbReference>
<dbReference type="GO" id="GO:2000009">
    <property type="term" value="P:negative regulation of protein localization to cell surface"/>
    <property type="evidence" value="ECO:0007669"/>
    <property type="project" value="Ensembl"/>
</dbReference>
<dbReference type="GO" id="GO:0086097">
    <property type="term" value="P:phospholipase C-activating angiotensin-activated signaling pathway"/>
    <property type="evidence" value="ECO:0007669"/>
    <property type="project" value="Ensembl"/>
</dbReference>
<dbReference type="GO" id="GO:2001259">
    <property type="term" value="P:positive regulation of cation channel activity"/>
    <property type="evidence" value="ECO:0000315"/>
    <property type="project" value="UniProtKB"/>
</dbReference>
<dbReference type="GO" id="GO:2001137">
    <property type="term" value="P:positive regulation of endocytic recycling"/>
    <property type="evidence" value="ECO:0000315"/>
    <property type="project" value="UniProtKB"/>
</dbReference>
<dbReference type="GO" id="GO:0043268">
    <property type="term" value="P:positive regulation of potassium ion transport"/>
    <property type="evidence" value="ECO:0007669"/>
    <property type="project" value="Ensembl"/>
</dbReference>
<dbReference type="GO" id="GO:0072659">
    <property type="term" value="P:protein localization to plasma membrane"/>
    <property type="evidence" value="ECO:0000315"/>
    <property type="project" value="UniProtKB"/>
</dbReference>
<dbReference type="GO" id="GO:0042391">
    <property type="term" value="P:regulation of membrane potential"/>
    <property type="evidence" value="ECO:0007669"/>
    <property type="project" value="Ensembl"/>
</dbReference>
<dbReference type="GO" id="GO:0045214">
    <property type="term" value="P:sarcomere organization"/>
    <property type="evidence" value="ECO:0007669"/>
    <property type="project" value="Ensembl"/>
</dbReference>
<dbReference type="CDD" id="cd21214">
    <property type="entry name" value="CH_ACTN_rpt1"/>
    <property type="match status" value="1"/>
</dbReference>
<dbReference type="CDD" id="cd21216">
    <property type="entry name" value="CH_ACTN_rpt2"/>
    <property type="match status" value="1"/>
</dbReference>
<dbReference type="CDD" id="cd00051">
    <property type="entry name" value="EFh"/>
    <property type="match status" value="1"/>
</dbReference>
<dbReference type="CDD" id="cd00176">
    <property type="entry name" value="SPEC"/>
    <property type="match status" value="1"/>
</dbReference>
<dbReference type="FunFam" id="1.10.238.10:FF:000004">
    <property type="entry name" value="Actinin alpha 1"/>
    <property type="match status" value="1"/>
</dbReference>
<dbReference type="FunFam" id="1.10.418.10:FF:000001">
    <property type="entry name" value="Actinin alpha 1"/>
    <property type="match status" value="1"/>
</dbReference>
<dbReference type="FunFam" id="1.20.58.60:FF:000004">
    <property type="entry name" value="Actinin alpha 1"/>
    <property type="match status" value="1"/>
</dbReference>
<dbReference type="FunFam" id="1.20.58.60:FF:000005">
    <property type="entry name" value="Actinin alpha 1"/>
    <property type="match status" value="1"/>
</dbReference>
<dbReference type="FunFam" id="1.10.418.10:FF:000005">
    <property type="entry name" value="Actinin alpha 4"/>
    <property type="match status" value="1"/>
</dbReference>
<dbReference type="FunFam" id="1.10.238.10:FF:000018">
    <property type="entry name" value="Actinin, alpha 1"/>
    <property type="match status" value="1"/>
</dbReference>
<dbReference type="FunFam" id="1.20.58.60:FF:000002">
    <property type="entry name" value="Actinin, alpha 1"/>
    <property type="match status" value="1"/>
</dbReference>
<dbReference type="FunFam" id="1.20.58.60:FF:000003">
    <property type="entry name" value="Actinin, alpha 1"/>
    <property type="match status" value="1"/>
</dbReference>
<dbReference type="Gene3D" id="1.20.58.60">
    <property type="match status" value="4"/>
</dbReference>
<dbReference type="Gene3D" id="1.10.418.10">
    <property type="entry name" value="Calponin-like domain"/>
    <property type="match status" value="2"/>
</dbReference>
<dbReference type="Gene3D" id="1.10.238.10">
    <property type="entry name" value="EF-hand"/>
    <property type="match status" value="2"/>
</dbReference>
<dbReference type="InterPro" id="IPR001589">
    <property type="entry name" value="Actinin_actin-bd_CS"/>
</dbReference>
<dbReference type="InterPro" id="IPR001715">
    <property type="entry name" value="CH_dom"/>
</dbReference>
<dbReference type="InterPro" id="IPR036872">
    <property type="entry name" value="CH_dom_sf"/>
</dbReference>
<dbReference type="InterPro" id="IPR011992">
    <property type="entry name" value="EF-hand-dom_pair"/>
</dbReference>
<dbReference type="InterPro" id="IPR014837">
    <property type="entry name" value="EF-hand_Ca_insen"/>
</dbReference>
<dbReference type="InterPro" id="IPR002048">
    <property type="entry name" value="EF_hand_dom"/>
</dbReference>
<dbReference type="InterPro" id="IPR018159">
    <property type="entry name" value="Spectrin/alpha-actinin"/>
</dbReference>
<dbReference type="InterPro" id="IPR002017">
    <property type="entry name" value="Spectrin_repeat"/>
</dbReference>
<dbReference type="PANTHER" id="PTHR11915">
    <property type="entry name" value="SPECTRIN/FILAMIN RELATED CYTOSKELETAL PROTEIN"/>
    <property type="match status" value="1"/>
</dbReference>
<dbReference type="Pfam" id="PF00307">
    <property type="entry name" value="CH"/>
    <property type="match status" value="2"/>
</dbReference>
<dbReference type="Pfam" id="PF13499">
    <property type="entry name" value="EF-hand_7"/>
    <property type="match status" value="1"/>
</dbReference>
<dbReference type="Pfam" id="PF08726">
    <property type="entry name" value="EFhand_Ca_insen"/>
    <property type="match status" value="1"/>
</dbReference>
<dbReference type="Pfam" id="PF00435">
    <property type="entry name" value="Spectrin"/>
    <property type="match status" value="4"/>
</dbReference>
<dbReference type="SMART" id="SM00033">
    <property type="entry name" value="CH"/>
    <property type="match status" value="2"/>
</dbReference>
<dbReference type="SMART" id="SM00054">
    <property type="entry name" value="EFh"/>
    <property type="match status" value="2"/>
</dbReference>
<dbReference type="SMART" id="SM01184">
    <property type="entry name" value="efhand_Ca_insen"/>
    <property type="match status" value="1"/>
</dbReference>
<dbReference type="SMART" id="SM00150">
    <property type="entry name" value="SPEC"/>
    <property type="match status" value="3"/>
</dbReference>
<dbReference type="SUPFAM" id="SSF47576">
    <property type="entry name" value="Calponin-homology domain, CH-domain"/>
    <property type="match status" value="1"/>
</dbReference>
<dbReference type="SUPFAM" id="SSF47473">
    <property type="entry name" value="EF-hand"/>
    <property type="match status" value="1"/>
</dbReference>
<dbReference type="SUPFAM" id="SSF46966">
    <property type="entry name" value="Spectrin repeat"/>
    <property type="match status" value="4"/>
</dbReference>
<dbReference type="PROSITE" id="PS00019">
    <property type="entry name" value="ACTININ_1"/>
    <property type="match status" value="1"/>
</dbReference>
<dbReference type="PROSITE" id="PS00020">
    <property type="entry name" value="ACTININ_2"/>
    <property type="match status" value="1"/>
</dbReference>
<dbReference type="PROSITE" id="PS50021">
    <property type="entry name" value="CH"/>
    <property type="match status" value="2"/>
</dbReference>
<dbReference type="PROSITE" id="PS50222">
    <property type="entry name" value="EF_HAND_2"/>
    <property type="match status" value="2"/>
</dbReference>
<gene>
    <name type="primary">Actn2</name>
</gene>
<comment type="function">
    <text evidence="1">F-actin cross-linking protein which is thought to anchor actin to a variety of intracellular structures. This is a bundling protein (By similarity).</text>
</comment>
<comment type="subunit">
    <text evidence="1 2">Homodimer; antiparallel. Also forms heterodimers with ACTN3. Interacts with ADAM12, MYOZ1, MYOZ2 and MYOZ3. Interacts via its C-terminal region with the LDB3 PDZ domain. Interacts with XIRP2. Interacts with DST (via N-terminus). Interacts with PARVB. Interacts with SYNPO2 (By similarity).</text>
</comment>
<comment type="interaction">
    <interactant intactId="EBI-299169">
        <id>Q9JI91</id>
    </interactant>
    <interactant intactId="EBI-400384">
        <id>P11798</id>
        <label>Camk2a</label>
    </interactant>
    <organismsDiffer>false</organismsDiffer>
    <experiments>3</experiments>
</comment>
<comment type="interaction">
    <interactant intactId="EBI-299169">
        <id>Q9JI91</id>
    </interactant>
    <interactant intactId="EBI-400125">
        <id>Q01097</id>
        <label>Grin2b</label>
    </interactant>
    <organismsDiffer>false</organismsDiffer>
    <experiments>2</experiments>
</comment>
<comment type="subcellular location">
    <subcellularLocation>
        <location evidence="5">Cytoplasm</location>
        <location evidence="5">Myofibril</location>
        <location evidence="5">Sarcomere</location>
        <location evidence="5">Z line</location>
    </subcellularLocation>
    <text>Colocalizes with MYOZ1 and FLNC at the Z-lines of skeletal muscle.</text>
</comment>
<comment type="PTM">
    <text evidence="1">Ubiquitinated by FBXL22, leading to proteasomal degradation.</text>
</comment>
<comment type="similarity">
    <text evidence="6">Belongs to the alpha-actinin family.</text>
</comment>
<protein>
    <recommendedName>
        <fullName>Alpha-actinin-2</fullName>
    </recommendedName>
    <alternativeName>
        <fullName>Alpha-actinin skeletal muscle isoform 2</fullName>
    </alternativeName>
    <alternativeName>
        <fullName>F-actin cross-linking protein</fullName>
    </alternativeName>
</protein>
<reference key="1">
    <citation type="journal article" date="2001" name="Hum. Mol. Genet.">
        <title>Differential expression of the actin-binding proteins, alpha-actinin-2 and -3, in different species: implications for the evolution of functional redundancy.</title>
        <authorList>
            <person name="Mills M."/>
            <person name="Yang N."/>
            <person name="Weinberger R."/>
            <person name="Vander Woude D.L."/>
            <person name="Beggs A.H."/>
            <person name="Easteal S."/>
            <person name="North K.N."/>
        </authorList>
    </citation>
    <scope>NUCLEOTIDE SEQUENCE [MRNA]</scope>
    <source>
        <tissue>Skeletal muscle</tissue>
    </source>
</reference>
<reference key="2">
    <citation type="journal article" date="2009" name="PLoS Biol.">
        <title>Lineage-specific biology revealed by a finished genome assembly of the mouse.</title>
        <authorList>
            <person name="Church D.M."/>
            <person name="Goodstadt L."/>
            <person name="Hillier L.W."/>
            <person name="Zody M.C."/>
            <person name="Goldstein S."/>
            <person name="She X."/>
            <person name="Bult C.J."/>
            <person name="Agarwala R."/>
            <person name="Cherry J.L."/>
            <person name="DiCuccio M."/>
            <person name="Hlavina W."/>
            <person name="Kapustin Y."/>
            <person name="Meric P."/>
            <person name="Maglott D."/>
            <person name="Birtle Z."/>
            <person name="Marques A.C."/>
            <person name="Graves T."/>
            <person name="Zhou S."/>
            <person name="Teague B."/>
            <person name="Potamousis K."/>
            <person name="Churas C."/>
            <person name="Place M."/>
            <person name="Herschleb J."/>
            <person name="Runnheim R."/>
            <person name="Forrest D."/>
            <person name="Amos-Landgraf J."/>
            <person name="Schwartz D.C."/>
            <person name="Cheng Z."/>
            <person name="Lindblad-Toh K."/>
            <person name="Eichler E.E."/>
            <person name="Ponting C.P."/>
        </authorList>
    </citation>
    <scope>NUCLEOTIDE SEQUENCE [LARGE SCALE GENOMIC DNA]</scope>
    <source>
        <strain>C57BL/6J</strain>
    </source>
</reference>
<reference key="3">
    <citation type="submission" date="2005-07" db="EMBL/GenBank/DDBJ databases">
        <authorList>
            <person name="Mural R.J."/>
            <person name="Adams M.D."/>
            <person name="Myers E.W."/>
            <person name="Smith H.O."/>
            <person name="Venter J.C."/>
        </authorList>
    </citation>
    <scope>NUCLEOTIDE SEQUENCE [LARGE SCALE GENOMIC DNA]</scope>
</reference>
<reference key="4">
    <citation type="journal article" date="2000" name="J. Biol. Chem.">
        <title>Binding of ADAM12, a marker of skeletal muscle regeneration, to the muscle-specific actin-binding protein, alpha-actinin-2, is required for myoblast fusion.</title>
        <authorList>
            <person name="Galliano M.-F."/>
            <person name="Huet C."/>
            <person name="Frygelius J."/>
            <person name="Polgren A."/>
            <person name="Wewer U.M."/>
            <person name="Engvall E."/>
        </authorList>
    </citation>
    <scope>INTERACTION WITH ADAM12</scope>
</reference>
<reference key="5">
    <citation type="journal article" date="2010" name="Cell">
        <title>A tissue-specific atlas of mouse protein phosphorylation and expression.</title>
        <authorList>
            <person name="Huttlin E.L."/>
            <person name="Jedrychowski M.P."/>
            <person name="Elias J.E."/>
            <person name="Goswami T."/>
            <person name="Rad R."/>
            <person name="Beausoleil S.A."/>
            <person name="Villen J."/>
            <person name="Haas W."/>
            <person name="Sowa M.E."/>
            <person name="Gygi S.P."/>
        </authorList>
    </citation>
    <scope>PHOSPHORYLATION [LARGE SCALE ANALYSIS] AT THR-237</scope>
    <scope>IDENTIFICATION BY MASS SPECTROMETRY [LARGE SCALE ANALYSIS]</scope>
    <source>
        <tissue>Brown adipose tissue</tissue>
        <tissue>Heart</tissue>
        <tissue>Lung</tissue>
    </source>
</reference>
<reference key="6">
    <citation type="journal article" date="2010" name="Exp. Cell Res.">
        <title>BPAG1 isoform-b: complex distribution pattern in striated and heart muscle and association with plectin and alpha-actinin.</title>
        <authorList>
            <person name="Steiner-Champliaud M.F."/>
            <person name="Schneider Y."/>
            <person name="Favre B."/>
            <person name="Paulhe F."/>
            <person name="Praetzel-Wunder S."/>
            <person name="Faulkner G."/>
            <person name="Konieczny P."/>
            <person name="Raith M."/>
            <person name="Wiche G."/>
            <person name="Adebola A."/>
            <person name="Liem R.K."/>
            <person name="Langbein L."/>
            <person name="Sonnenberg A."/>
            <person name="Fontao L."/>
            <person name="Borradori L."/>
        </authorList>
    </citation>
    <scope>SUBCELLULAR LOCATION</scope>
</reference>
<sequence length="894" mass="103834">MNQIEPGVQYNYVYDEDEYMIQEEEWDRDLLLDPAWEKQQRKTFTAWCNSHLRKAGTQIENIEEDFRNGLKLMLLLEVISGERLPKPDRGKMRFHKIANVNKALDYIASKGVKLVSIGAEEIVDGNVKMTLGMIWTIILRFAIQDISVEETSAKEGLLLWCQRKTAPYRNVNIQNFHTSWKDGLGLCALIHRHRPDLIDYSKLNKDDPIGNINLAMEIAEKHLDIPKMLDAEDIVNTPKPDERAIMTYVSCFYHAFAGAEQAETAANRICKVLAVNQENERLMEEYERLASELLEWIRRTIPWLENRTPEKTMQAMQKKLEDFRDYRRKHKPPKVQEKCQLEINFNTLQTKLRISNRPAFMPSEGKMVSDIAGAWQRLEQAEKGYEEWLLNEIRRLERLEHLAEKFRQKASTHETWAYGKEQILLQKDYESASLTEVRALLRKHEAFESDLAAHQDRVEQIAAIAQELNELDYHDAVNVNDRCQKICDQWDRLGTLTQKRREALERTEKLLETIDQLHLEFAKRAAPFNNWMEGAMEDLQDMFIVHSIEEIQSLITAHEQFKATLPEADGERQSILAIQNEVEKVIQSYSIRISSSNPYSTVTMDELRNKWDKVKQLVPVRDQSLQEELARQHANERLRRQFAAQANAIGPWIQNKMEEIARSSIQITGALEDQMNQLKQYEHNIINYKNNIDKLEGDHQLIQEALVFDNKHTNYTMEHIRVGWELLLTTIARTINEVETQILTRDAKGITQEQMNEFRASFNHFDRRKNGLMDHEDFRACLISMGYDLGEAEFARIMTLVDPNGQGTVTFQSFIDFMTRETADTDTAEQVIASFRILASDKPYILAEELRRELPPDQAQYCIKRMPPYSGPGSVPGALDYTAFSSALYGESDL</sequence>